<keyword id="KW-0002">3D-structure</keyword>
<keyword id="KW-0158">Chromosome</keyword>
<keyword id="KW-0963">Cytoplasm</keyword>
<keyword id="KW-0238">DNA-binding</keyword>
<keyword id="KW-0488">Methylation</keyword>
<keyword id="KW-1185">Reference proteome</keyword>
<accession>Q97ZE3</accession>
<reference key="1">
    <citation type="journal article" date="2001" name="Proc. Natl. Acad. Sci. U.S.A.">
        <title>The complete genome of the crenarchaeon Sulfolobus solfataricus P2.</title>
        <authorList>
            <person name="She Q."/>
            <person name="Singh R.K."/>
            <person name="Confalonieri F."/>
            <person name="Zivanovic Y."/>
            <person name="Allard G."/>
            <person name="Awayez M.J."/>
            <person name="Chan-Weiher C.C.-Y."/>
            <person name="Clausen I.G."/>
            <person name="Curtis B.A."/>
            <person name="De Moors A."/>
            <person name="Erauso G."/>
            <person name="Fletcher C."/>
            <person name="Gordon P.M.K."/>
            <person name="Heikamp-de Jong I."/>
            <person name="Jeffries A.C."/>
            <person name="Kozera C.J."/>
            <person name="Medina N."/>
            <person name="Peng X."/>
            <person name="Thi-Ngoc H.P."/>
            <person name="Redder P."/>
            <person name="Schenk M.E."/>
            <person name="Theriault C."/>
            <person name="Tolstrup N."/>
            <person name="Charlebois R.L."/>
            <person name="Doolittle W.F."/>
            <person name="Duguet M."/>
            <person name="Gaasterland T."/>
            <person name="Garrett R.A."/>
            <person name="Ragan M.A."/>
            <person name="Sensen C.W."/>
            <person name="Van der Oost J."/>
        </authorList>
    </citation>
    <scope>NUCLEOTIDE SEQUENCE [LARGE SCALE GENOMIC DNA]</scope>
    <source>
        <strain>ATCC 35092 / DSM 1617 / JCM 11322 / P2</strain>
    </source>
</reference>
<reference key="2">
    <citation type="journal article" date="2022" name="Biomolecules">
        <title>Interplay between Alba and Cren7 Regulates Chromatin Compaction in Sulfolobus solfataricus.</title>
        <authorList>
            <person name="Cajili M.K.M."/>
            <person name="Prieto E.I."/>
        </authorList>
    </citation>
    <scope>FUNCTION</scope>
</reference>
<reference key="3">
    <citation type="journal article" date="2022" name="Int. J. Biol. Macromol.">
        <title>Essentiality of core hydrophobicity to the structure and function of archaeal chromatin protein Cren7.</title>
        <authorList>
            <person name="Tian L."/>
            <person name="Ding N."/>
            <person name="Liu X."/>
            <person name="Chen Y."/>
            <person name="Zhang Z."/>
        </authorList>
    </citation>
    <scope>FUNCTION</scope>
    <scope>MUTAGENESIS OF PHE-41</scope>
</reference>
<reference key="4">
    <citation type="journal article" date="2022" name="Phys. Chem. Chem. Phys.">
        <title>Structural and thermodynamic insights into the Cren7 mediated DNA organization in Crenarchaeota.</title>
        <authorList>
            <person name="K G."/>
            <person name="Thomas A.R."/>
            <person name="Vyjayanthi T.S."/>
            <person name="Mandal S.S."/>
        </authorList>
    </citation>
    <scope>FUNCTION</scope>
</reference>
<reference key="5">
    <citation type="journal article" date="2023" name="Biophys. J.">
        <title>Molecular contacts in the Cren7-DNA complex: A quantitative investigation for electrostatic interaction.</title>
        <authorList>
            <person name="K G."/>
            <person name="Verma A."/>
            <person name="Mondal P."/>
            <person name="Mandal S.S."/>
        </authorList>
    </citation>
    <scope>FUNCTION</scope>
    <scope>MUTAGENESIS OF LYS-24; LYS-31; LYS-42 AND LYS-48</scope>
</reference>
<reference evidence="10" key="6">
    <citation type="journal article" date="2008" name="Nucleic Acids Res.">
        <title>Biochemical and structural characterization of Cren7, a novel chromatin protein conserved among Crenarchaea.</title>
        <authorList>
            <person name="Guo L."/>
            <person name="Feng Y."/>
            <person name="Zhang Z."/>
            <person name="Yao H."/>
            <person name="Luo Y."/>
            <person name="Wang J."/>
            <person name="Huang L."/>
        </authorList>
    </citation>
    <scope>STRUCTURE BY NMR</scope>
    <scope>FUNCTION</scope>
    <scope>SUBUNIT</scope>
    <scope>SUBCELLULAR LOCATION</scope>
    <scope>DEVELOPMENTAL STAGE</scope>
    <source>
        <strain>ATCC 35092 / DSM 1617 / JCM 11322 / P2</strain>
    </source>
</reference>
<reference evidence="11" key="7">
    <citation type="journal article" date="2010" name="Protein Sci.">
        <title>Crystal structure of the crenarchaeal conserved chromatin protein Cren7 and double-stranded DNA complex.</title>
        <authorList>
            <person name="Feng Y."/>
            <person name="Yao H."/>
            <person name="Wang J."/>
        </authorList>
    </citation>
    <scope>X-RAY CRYSTALLOGRAPHY (1.60 ANGSTROMS) OF 6-60 IN COMPLEX WITH DNA</scope>
    <scope>FUNCTION</scope>
</reference>
<organism>
    <name type="scientific">Saccharolobus solfataricus (strain ATCC 35092 / DSM 1617 / JCM 11322 / P2)</name>
    <name type="common">Sulfolobus solfataricus</name>
    <dbReference type="NCBI Taxonomy" id="273057"/>
    <lineage>
        <taxon>Archaea</taxon>
        <taxon>Thermoproteota</taxon>
        <taxon>Thermoprotei</taxon>
        <taxon>Sulfolobales</taxon>
        <taxon>Sulfolobaceae</taxon>
        <taxon>Saccharolobus</taxon>
    </lineage>
</organism>
<comment type="function">
    <text evidence="3 4 5 6 7 8">A highly abundant chromatin protein, it binds double-stranded DNA without sequence specificity; there is approximately 1 Cren7 molecule for 10-12 bp of DNA (PubMed:18096617, PubMed:20512977, PubMed:35728637, PubMed:35920727, PubMed:37016575). Constrains negative DNA supercoils (PubMed:18096617, PubMed:35728637). Induces DNA compaction and mediates intermolecular DNA bridging (PubMed:35728637). Binding does not require protein methylation (PubMed:18096617). Binds single-stranded DNA weakly (PubMed:18096617). Increases DNA stability against thermal denaturation (PubMed:18096617, PubMed:35920727, PubMed:37016575). Promotes formation of loose nucleoprotein structures with long DNA in the presence of albA proteins (PubMed:35454068).</text>
</comment>
<comment type="subunit">
    <text evidence="2 3">Monomer.</text>
</comment>
<comment type="subcellular location">
    <subcellularLocation>
        <location evidence="2 3">Chromosome</location>
    </subcellularLocation>
    <subcellularLocation>
        <location evidence="2 3">Cytoplasm</location>
    </subcellularLocation>
</comment>
<comment type="developmental stage">
    <text evidence="3">Cellular levels are constant during the growth cycle.</text>
</comment>
<comment type="PTM">
    <text evidence="1">Methylated at multiple sites, to varying extents.</text>
</comment>
<comment type="similarity">
    <text evidence="2 9">Belongs to the Cren7 family.</text>
</comment>
<evidence type="ECO:0000250" key="1">
    <source>
        <dbReference type="UniProtKB" id="P0C835"/>
    </source>
</evidence>
<evidence type="ECO:0000255" key="2">
    <source>
        <dbReference type="HAMAP-Rule" id="MF_01387"/>
    </source>
</evidence>
<evidence type="ECO:0000269" key="3">
    <source>
    </source>
</evidence>
<evidence type="ECO:0000269" key="4">
    <source>
    </source>
</evidence>
<evidence type="ECO:0000269" key="5">
    <source>
    </source>
</evidence>
<evidence type="ECO:0000269" key="6">
    <source>
    </source>
</evidence>
<evidence type="ECO:0000269" key="7">
    <source>
    </source>
</evidence>
<evidence type="ECO:0000269" key="8">
    <source>
    </source>
</evidence>
<evidence type="ECO:0000305" key="9"/>
<evidence type="ECO:0007744" key="10">
    <source>
        <dbReference type="PDB" id="2JTM"/>
    </source>
</evidence>
<evidence type="ECO:0007744" key="11">
    <source>
        <dbReference type="PDB" id="3KXT"/>
    </source>
</evidence>
<evidence type="ECO:0007829" key="12">
    <source>
        <dbReference type="PDB" id="3KXT"/>
    </source>
</evidence>
<feature type="initiator methionine" description="Removed" evidence="1">
    <location>
        <position position="1"/>
    </location>
</feature>
<feature type="chain" id="PRO_0000345178" description="Chromatin protein Cren7">
    <location>
        <begin position="2"/>
        <end position="60"/>
    </location>
</feature>
<feature type="modified residue" description="N6-methyllysine" evidence="1">
    <location>
        <position position="16"/>
    </location>
</feature>
<feature type="mutagenesis site" description="Slightly reduces the melting temperature of the protein. Slightly reduces affinity for calf thymus DNA and poly(dA-dT) oligonucleotides. Increases affinity for poly(dG-dC) oligonucleotide. Slightly reduces thermostability of protein-DNA complexes at low salt concentrations." evidence="8">
    <original>K</original>
    <variation>E</variation>
    <location>
        <position position="24"/>
    </location>
</feature>
<feature type="mutagenesis site" description="Slightly reduces the melting temperature of the protein. Destabilizes complex with DNA. Slightly reduces affinity for calf thymus DNA and poly(dA-dT) oligonucleotides. No significant effect on affinity for poly(dG-dC) oligonucleotide. Reduces thermostability of protein-DNA complexes at low salt concentrations." evidence="8">
    <original>K</original>
    <variation>E</variation>
    <location>
        <position position="31"/>
    </location>
</feature>
<feature type="mutagenesis site" description="Results in a significant protein misfolding, reduced thermostability, reduced ability to mediate DNA compaction and bridging. No effect on DNA binding and constraining DNA into negative supercoils." evidence="6">
    <original>F</original>
    <variation>A</variation>
    <location>
        <position position="41"/>
    </location>
</feature>
<feature type="mutagenesis site" description="Slightly reduces the melting temperature of the protein. Slightly reduces affinity for calf thymus DNA and poly(dA-dT) oligonucleotides. No significant effect on affinity for poly(dG-dC) oligonucleotide. Reduces thermostability of protein-DNA complexes at low salt concentrations." evidence="8">
    <original>K</original>
    <variation>E</variation>
    <location>
        <position position="42"/>
    </location>
</feature>
<feature type="mutagenesis site" description="Slightly reduces the melting temperature of the protein. Slightly reduces affinity for calf thymus DNA and poly(dA-dT) oligonucleotides. No significant effect on affinity for poly(dG-dC) oligonucleotide. Reduces thermostability of protein-DNA complexes at low salt concentrations." evidence="8">
    <original>K</original>
    <variation>E</variation>
    <location>
        <position position="48"/>
    </location>
</feature>
<feature type="strand" evidence="12">
    <location>
        <begin position="8"/>
        <end position="11"/>
    </location>
</feature>
<feature type="strand" evidence="12">
    <location>
        <begin position="17"/>
        <end position="20"/>
    </location>
</feature>
<feature type="strand" evidence="12">
    <location>
        <begin position="23"/>
        <end position="28"/>
    </location>
</feature>
<feature type="strand" evidence="12">
    <location>
        <begin position="36"/>
        <end position="42"/>
    </location>
</feature>
<feature type="turn" evidence="12">
    <location>
        <begin position="44"/>
        <end position="46"/>
    </location>
</feature>
<feature type="strand" evidence="12">
    <location>
        <begin position="49"/>
        <end position="53"/>
    </location>
</feature>
<sequence>MSSGKKPVKVKTPAGKEAELVPEKVWALAPKGRKGVKIGLFKDPETGKYFRHKLPDDYPI</sequence>
<protein>
    <recommendedName>
        <fullName evidence="2">Chromatin protein Cren7</fullName>
    </recommendedName>
</protein>
<proteinExistence type="evidence at protein level"/>
<dbReference type="EMBL" id="AE006641">
    <property type="protein sequence ID" value="AAK41249.1"/>
    <property type="molecule type" value="Genomic_DNA"/>
</dbReference>
<dbReference type="PIR" id="B90249">
    <property type="entry name" value="B90249"/>
</dbReference>
<dbReference type="RefSeq" id="WP_009992425.1">
    <property type="nucleotide sequence ID" value="NC_002754.1"/>
</dbReference>
<dbReference type="PDB" id="2JTM">
    <property type="method" value="NMR"/>
    <property type="chains" value="A=1-60"/>
</dbReference>
<dbReference type="PDB" id="3KXT">
    <property type="method" value="X-ray"/>
    <property type="resolution" value="1.60 A"/>
    <property type="chains" value="A=6-60"/>
</dbReference>
<dbReference type="PDB" id="3LWH">
    <property type="method" value="X-ray"/>
    <property type="resolution" value="1.90 A"/>
    <property type="chains" value="A=1-60"/>
</dbReference>
<dbReference type="PDB" id="3LWI">
    <property type="method" value="X-ray"/>
    <property type="resolution" value="2.30 A"/>
    <property type="chains" value="A/B=1-60"/>
</dbReference>
<dbReference type="PDB" id="4R55">
    <property type="method" value="X-ray"/>
    <property type="resolution" value="1.80 A"/>
    <property type="chains" value="A=1-60"/>
</dbReference>
<dbReference type="PDB" id="4R56">
    <property type="method" value="X-ray"/>
    <property type="resolution" value="2.30 A"/>
    <property type="chains" value="A/B=1-60"/>
</dbReference>
<dbReference type="PDB" id="5K07">
    <property type="method" value="X-ray"/>
    <property type="resolution" value="2.00 A"/>
    <property type="chains" value="A=1-60"/>
</dbReference>
<dbReference type="PDB" id="5K17">
    <property type="method" value="X-ray"/>
    <property type="resolution" value="2.10 A"/>
    <property type="chains" value="A/B=1-60"/>
</dbReference>
<dbReference type="PDB" id="5WVW">
    <property type="method" value="X-ray"/>
    <property type="resolution" value="1.80 A"/>
    <property type="chains" value="A/B=1-60"/>
</dbReference>
<dbReference type="PDB" id="5WVY">
    <property type="method" value="X-ray"/>
    <property type="resolution" value="2.00 A"/>
    <property type="chains" value="A/B=1-60"/>
</dbReference>
<dbReference type="PDB" id="5WVZ">
    <property type="method" value="X-ray"/>
    <property type="resolution" value="2.30 A"/>
    <property type="chains" value="A/B=1-60"/>
</dbReference>
<dbReference type="PDB" id="5WWC">
    <property type="method" value="X-ray"/>
    <property type="resolution" value="1.90 A"/>
    <property type="chains" value="A/B=1-60"/>
</dbReference>
<dbReference type="PDB" id="6A2H">
    <property type="method" value="X-ray"/>
    <property type="resolution" value="2.30 A"/>
    <property type="chains" value="A=1-60"/>
</dbReference>
<dbReference type="PDB" id="6A2I">
    <property type="method" value="X-ray"/>
    <property type="resolution" value="2.40 A"/>
    <property type="chains" value="A/B=1-60"/>
</dbReference>
<dbReference type="PDBsum" id="2JTM"/>
<dbReference type="PDBsum" id="3KXT"/>
<dbReference type="PDBsum" id="3LWH"/>
<dbReference type="PDBsum" id="3LWI"/>
<dbReference type="PDBsum" id="4R55"/>
<dbReference type="PDBsum" id="4R56"/>
<dbReference type="PDBsum" id="5K07"/>
<dbReference type="PDBsum" id="5K17"/>
<dbReference type="PDBsum" id="5WVW"/>
<dbReference type="PDBsum" id="5WVY"/>
<dbReference type="PDBsum" id="5WVZ"/>
<dbReference type="PDBsum" id="5WWC"/>
<dbReference type="PDBsum" id="6A2H"/>
<dbReference type="PDBsum" id="6A2I"/>
<dbReference type="SMR" id="Q97ZE3"/>
<dbReference type="STRING" id="273057.SSO6901"/>
<dbReference type="PaxDb" id="273057-SSO6901"/>
<dbReference type="EnsemblBacteria" id="AAK41249">
    <property type="protein sequence ID" value="AAK41249"/>
    <property type="gene ID" value="SSO6901"/>
</dbReference>
<dbReference type="GeneID" id="44129907"/>
<dbReference type="KEGG" id="sso:SSO6901"/>
<dbReference type="PATRIC" id="fig|273057.12.peg.974"/>
<dbReference type="eggNOG" id="arCOG04114">
    <property type="taxonomic scope" value="Archaea"/>
</dbReference>
<dbReference type="HOGENOM" id="CLU_2911298_0_0_2"/>
<dbReference type="InParanoid" id="Q97ZE3"/>
<dbReference type="EvolutionaryTrace" id="Q97ZE3"/>
<dbReference type="Proteomes" id="UP000001974">
    <property type="component" value="Chromosome"/>
</dbReference>
<dbReference type="GO" id="GO:0005694">
    <property type="term" value="C:chromosome"/>
    <property type="evidence" value="ECO:0007669"/>
    <property type="project" value="UniProtKB-SubCell"/>
</dbReference>
<dbReference type="GO" id="GO:0005737">
    <property type="term" value="C:cytoplasm"/>
    <property type="evidence" value="ECO:0007669"/>
    <property type="project" value="UniProtKB-SubCell"/>
</dbReference>
<dbReference type="GO" id="GO:0003690">
    <property type="term" value="F:double-stranded DNA binding"/>
    <property type="evidence" value="ECO:0007669"/>
    <property type="project" value="UniProtKB-UniRule"/>
</dbReference>
<dbReference type="Gene3D" id="2.30.30.610">
    <property type="entry name" value="Chromatin protein Cren7"/>
    <property type="match status" value="1"/>
</dbReference>
<dbReference type="HAMAP" id="MF_01387">
    <property type="entry name" value="Chromatin_Cren7"/>
    <property type="match status" value="1"/>
</dbReference>
<dbReference type="InterPro" id="IPR038647">
    <property type="entry name" value="Cren7_sf"/>
</dbReference>
<dbReference type="InterPro" id="IPR020906">
    <property type="entry name" value="dsDNA-bd_Cren7"/>
</dbReference>
<dbReference type="Pfam" id="PF11520">
    <property type="entry name" value="Cren7"/>
    <property type="match status" value="1"/>
</dbReference>
<gene>
    <name type="primary">creN7</name>
    <name type="ordered locus">SSO6901</name>
</gene>
<name>CREN7_SACS2</name>